<organism>
    <name type="scientific">Deinococcus deserti (strain DSM 17065 / CIP 109153 / LMG 22923 / VCD115)</name>
    <dbReference type="NCBI Taxonomy" id="546414"/>
    <lineage>
        <taxon>Bacteria</taxon>
        <taxon>Thermotogati</taxon>
        <taxon>Deinococcota</taxon>
        <taxon>Deinococci</taxon>
        <taxon>Deinococcales</taxon>
        <taxon>Deinococcaceae</taxon>
        <taxon>Deinococcus</taxon>
    </lineage>
</organism>
<feature type="chain" id="PRO_0000432102" description="Radiation response metalloprotease IrrE">
    <location>
        <begin position="1"/>
        <end position="281"/>
    </location>
</feature>
<feature type="region of interest" description="Disordered" evidence="1">
    <location>
        <begin position="262"/>
        <end position="281"/>
    </location>
</feature>
<feature type="compositionally biased region" description="Basic and acidic residues" evidence="1">
    <location>
        <begin position="267"/>
        <end position="281"/>
    </location>
</feature>
<feature type="active site" evidence="6 7">
    <location>
        <position position="83"/>
    </location>
</feature>
<feature type="binding site" evidence="2">
    <location>
        <position position="82"/>
    </location>
    <ligand>
        <name>Zn(2+)</name>
        <dbReference type="ChEBI" id="CHEBI:29105"/>
        <note>catalytic</note>
    </ligand>
</feature>
<feature type="binding site" evidence="2">
    <location>
        <position position="86"/>
    </location>
    <ligand>
        <name>Zn(2+)</name>
        <dbReference type="ChEBI" id="CHEBI:29105"/>
        <note>catalytic</note>
    </ligand>
</feature>
<feature type="binding site" evidence="2">
    <location>
        <position position="113"/>
    </location>
    <ligand>
        <name>Zn(2+)</name>
        <dbReference type="ChEBI" id="CHEBI:29105"/>
        <note>catalytic</note>
    </ligand>
</feature>
<feature type="mutagenesis site" description="No change in radiotolerance; when associated with A-48." evidence="2">
    <original>H</original>
    <variation>A</variation>
    <location>
        <position position="35"/>
    </location>
</feature>
<feature type="mutagenesis site" description="No change in radiotolerance; when associated with A-35." evidence="2">
    <original>F</original>
    <variation>A</variation>
    <location>
        <position position="48"/>
    </location>
</feature>
<feature type="mutagenesis site" description="Radiosensitive. Lack of protease activity." evidence="2 3">
    <original>E</original>
    <variation>Q</variation>
    <location>
        <position position="83"/>
    </location>
</feature>
<feature type="mutagenesis site" description="Radiosensitive." evidence="2">
    <original>H</original>
    <variation>S</variation>
    <location>
        <position position="86"/>
    </location>
</feature>
<feature type="mutagenesis site" description="Decrease in radiotolerance." evidence="2">
    <original>Y</original>
    <variation>A</variation>
    <location>
        <position position="160"/>
    </location>
</feature>
<feature type="mutagenesis site" description="No change in radiotolerance." evidence="2">
    <original>C</original>
    <variation>A</variation>
    <location>
        <position position="175"/>
    </location>
</feature>
<feature type="mutagenesis site" description="Strong decrease in radiotolerance." evidence="2">
    <original>H</original>
    <variation>L</variation>
    <location>
        <position position="217"/>
    </location>
</feature>
<feature type="helix" evidence="9">
    <location>
        <begin position="10"/>
        <end position="27"/>
    </location>
</feature>
<feature type="strand" evidence="9">
    <location>
        <begin position="29"/>
        <end position="32"/>
    </location>
</feature>
<feature type="helix" evidence="9">
    <location>
        <begin position="34"/>
        <end position="39"/>
    </location>
</feature>
<feature type="strand" evidence="9">
    <location>
        <begin position="45"/>
        <end position="49"/>
    </location>
</feature>
<feature type="strand" evidence="9">
    <location>
        <begin position="56"/>
        <end position="59"/>
    </location>
</feature>
<feature type="turn" evidence="9">
    <location>
        <begin position="60"/>
        <end position="63"/>
    </location>
</feature>
<feature type="strand" evidence="9">
    <location>
        <begin position="64"/>
        <end position="68"/>
    </location>
</feature>
<feature type="helix" evidence="9">
    <location>
        <begin position="73"/>
        <end position="91"/>
    </location>
</feature>
<feature type="helix" evidence="9">
    <location>
        <begin position="93"/>
        <end position="102"/>
    </location>
</feature>
<feature type="helix" evidence="9">
    <location>
        <begin position="105"/>
        <end position="124"/>
    </location>
</feature>
<feature type="helix" evidence="9">
    <location>
        <begin position="127"/>
        <end position="137"/>
    </location>
</feature>
<feature type="helix" evidence="9">
    <location>
        <begin position="141"/>
        <end position="151"/>
    </location>
</feature>
<feature type="helix" evidence="9">
    <location>
        <begin position="155"/>
        <end position="164"/>
    </location>
</feature>
<feature type="strand" evidence="9">
    <location>
        <begin position="170"/>
        <end position="177"/>
    </location>
</feature>
<feature type="strand" evidence="9">
    <location>
        <begin position="192"/>
        <end position="199"/>
    </location>
</feature>
<feature type="helix" evidence="9">
    <location>
        <begin position="218"/>
        <end position="225"/>
    </location>
</feature>
<feature type="strand" evidence="9">
    <location>
        <begin position="229"/>
        <end position="236"/>
    </location>
</feature>
<feature type="strand" evidence="9">
    <location>
        <begin position="242"/>
        <end position="251"/>
    </location>
</feature>
<feature type="strand" evidence="9">
    <location>
        <begin position="253"/>
        <end position="261"/>
    </location>
</feature>
<gene>
    <name evidence="4" type="primary">irrE</name>
    <name evidence="8" type="ordered locus">Deide_03030</name>
</gene>
<name>IRRE_DEIDV</name>
<reference key="1">
    <citation type="journal article" date="2009" name="PLoS Genet.">
        <title>Alliance of proteomics and genomics to unravel the specificities of Sahara bacterium Deinococcus deserti.</title>
        <authorList>
            <person name="de Groot A."/>
            <person name="Dulermo R."/>
            <person name="Ortet P."/>
            <person name="Blanchard L."/>
            <person name="Guerin P."/>
            <person name="Fernandez B."/>
            <person name="Vacherie B."/>
            <person name="Dossat C."/>
            <person name="Jolivet E."/>
            <person name="Siguier P."/>
            <person name="Chandler M."/>
            <person name="Barakat M."/>
            <person name="Dedieu A."/>
            <person name="Barbe V."/>
            <person name="Heulin T."/>
            <person name="Sommer S."/>
            <person name="Achouak W."/>
            <person name="Armengaud J."/>
        </authorList>
    </citation>
    <scope>NUCLEOTIDE SEQUENCE [LARGE SCALE GENOMIC DNA]</scope>
    <source>
        <strain>DSM 17065 / CIP 109153 / LMG 22923 / VCD115</strain>
    </source>
</reference>
<reference key="2">
    <citation type="journal article" date="2009" name="J. Mol. Biol.">
        <title>Crystal structure of the IrrE protein, a central regulator of DNA damage repair in deinococcaceae.</title>
        <authorList>
            <person name="Vujicic-Zagar A."/>
            <person name="Dulermo R."/>
            <person name="Le Gorrec M."/>
            <person name="Vannier F."/>
            <person name="Servant P."/>
            <person name="Sommer S."/>
            <person name="de Groot A."/>
            <person name="Serre L."/>
        </authorList>
    </citation>
    <scope>NUCLEOTIDE SEQUENCE [MRNA]</scope>
    <scope>DOMAIN</scope>
    <scope>DISRUPTION PHENOTYPE</scope>
    <scope>X-RAY CRYSTALLOGRAPHY (2.60 ANGSTROMS) IN COMPLEX WITH ZINC</scope>
    <scope>ACTIVE SITE</scope>
    <scope>MUTAGENESIS OF HIS-35; PHE-48; GLU-83; HIS-86; TYR-160; CYS-175 AND HIS-217</scope>
    <source>
        <strain>DSM 17065 / CIP 109153 / LMG 22923 / VCD115</strain>
    </source>
</reference>
<reference key="3">
    <citation type="journal article" date="2014" name="Mol. Microbiol.">
        <title>Radiation response in Deinococcus deserti: IrrE is a metalloprotease that cleaves repressor protein DdrO.</title>
        <authorList>
            <person name="Ludanyi M."/>
            <person name="Blanchard L."/>
            <person name="Dulermo R."/>
            <person name="Brandelet G."/>
            <person name="Bellanger L."/>
            <person name="Pignol D."/>
            <person name="Lemaire D."/>
            <person name="de Groot A."/>
        </authorList>
    </citation>
    <scope>FUNCTION</scope>
    <scope>ACTIVITY REGULATION</scope>
    <scope>SUBUNIT</scope>
    <scope>MUTAGENESIS OF GLU-83</scope>
    <scope>ACTIVE SITE</scope>
    <source>
        <strain>RD19</strain>
    </source>
</reference>
<evidence type="ECO:0000256" key="1">
    <source>
        <dbReference type="SAM" id="MobiDB-lite"/>
    </source>
</evidence>
<evidence type="ECO:0000269" key="2">
    <source>
    </source>
</evidence>
<evidence type="ECO:0000269" key="3">
    <source>
    </source>
</evidence>
<evidence type="ECO:0000303" key="4">
    <source>
    </source>
</evidence>
<evidence type="ECO:0000305" key="5"/>
<evidence type="ECO:0000305" key="6">
    <source>
    </source>
</evidence>
<evidence type="ECO:0000305" key="7">
    <source>
    </source>
</evidence>
<evidence type="ECO:0000312" key="8">
    <source>
        <dbReference type="EMBL" id="ACO45122.1"/>
    </source>
</evidence>
<evidence type="ECO:0007829" key="9">
    <source>
        <dbReference type="PDB" id="3DTE"/>
    </source>
</evidence>
<keyword id="KW-0002">3D-structure</keyword>
<keyword id="KW-0378">Hydrolase</keyword>
<keyword id="KW-0479">Metal-binding</keyword>
<keyword id="KW-0482">Metalloprotease</keyword>
<keyword id="KW-0645">Protease</keyword>
<keyword id="KW-1185">Reference proteome</keyword>
<keyword id="KW-0346">Stress response</keyword>
<keyword id="KW-0862">Zinc</keyword>
<accession>C1CZ84</accession>
<accession>B5B9W8</accession>
<comment type="function">
    <text evidence="3">Plays a central regulatory role in DNA repair and protection pathways in response to radiation stress. Acts as a site-specific metalloprotease that cleaves and inactivates the repressor proteins DdrOC and DdrOP3, resulting in induced expression of genes required for DNA repair and cell survival after exposure to radiation.</text>
</comment>
<comment type="activity regulation">
    <text evidence="3">Protease activity is inhibited by EDTA.</text>
</comment>
<comment type="subunit">
    <text evidence="3">Interacts with DdrOC.</text>
</comment>
<comment type="domain">
    <text evidence="2">Composed of three structural domains: an N-terminal zinc-peptidase domain, a central helix-turn-helix motif, and a C-terminal GAF-type domain.</text>
</comment>
<comment type="disruption phenotype">
    <text evidence="2">Deletion mutant is radiosensitive.</text>
</comment>
<protein>
    <recommendedName>
        <fullName evidence="5">Radiation response metalloprotease IrrE</fullName>
        <ecNumber evidence="3">3.4.24.-</ecNumber>
    </recommendedName>
    <alternativeName>
        <fullName evidence="5">DNA repair regulatory protein IrrE</fullName>
    </alternativeName>
</protein>
<dbReference type="EC" id="3.4.24.-" evidence="3"/>
<dbReference type="EMBL" id="CP001114">
    <property type="protein sequence ID" value="ACO45122.1"/>
    <property type="molecule type" value="Genomic_DNA"/>
</dbReference>
<dbReference type="EMBL" id="FM200036">
    <property type="protein sequence ID" value="CAQ86664.1"/>
    <property type="molecule type" value="mRNA"/>
</dbReference>
<dbReference type="PDB" id="3DTE">
    <property type="method" value="X-ray"/>
    <property type="resolution" value="2.60 A"/>
    <property type="chains" value="A=1-281"/>
</dbReference>
<dbReference type="PDB" id="3DTI">
    <property type="method" value="X-ray"/>
    <property type="resolution" value="3.50 A"/>
    <property type="chains" value="A=1-281"/>
</dbReference>
<dbReference type="PDB" id="3DTK">
    <property type="method" value="X-ray"/>
    <property type="resolution" value="3.24 A"/>
    <property type="chains" value="A=1-281"/>
</dbReference>
<dbReference type="PDBsum" id="3DTE"/>
<dbReference type="PDBsum" id="3DTI"/>
<dbReference type="PDBsum" id="3DTK"/>
<dbReference type="SMR" id="C1CZ84"/>
<dbReference type="STRING" id="546414.Deide_03030"/>
<dbReference type="MEROPS" id="M78.002"/>
<dbReference type="PaxDb" id="546414-Deide_03030"/>
<dbReference type="KEGG" id="ddr:Deide_03030"/>
<dbReference type="eggNOG" id="COG2856">
    <property type="taxonomic scope" value="Bacteria"/>
</dbReference>
<dbReference type="HOGENOM" id="CLU_1052605_0_0_0"/>
<dbReference type="EvolutionaryTrace" id="C1CZ84"/>
<dbReference type="Proteomes" id="UP000002208">
    <property type="component" value="Chromosome"/>
</dbReference>
<dbReference type="GO" id="GO:0046872">
    <property type="term" value="F:metal ion binding"/>
    <property type="evidence" value="ECO:0007669"/>
    <property type="project" value="UniProtKB-KW"/>
</dbReference>
<dbReference type="GO" id="GO:0008237">
    <property type="term" value="F:metallopeptidase activity"/>
    <property type="evidence" value="ECO:0007669"/>
    <property type="project" value="UniProtKB-KW"/>
</dbReference>
<dbReference type="GO" id="GO:0006508">
    <property type="term" value="P:proteolysis"/>
    <property type="evidence" value="ECO:0007669"/>
    <property type="project" value="UniProtKB-KW"/>
</dbReference>
<dbReference type="Gene3D" id="1.10.10.2910">
    <property type="match status" value="1"/>
</dbReference>
<dbReference type="Gene3D" id="3.30.450.130">
    <property type="entry name" value="irre protein"/>
    <property type="match status" value="1"/>
</dbReference>
<dbReference type="Gene3D" id="1.10.10.1030">
    <property type="entry name" value="IrrE, HTH domain"/>
    <property type="match status" value="1"/>
</dbReference>
<dbReference type="InterPro" id="IPR044853">
    <property type="entry name" value="G3DSA:1.10.10.1030"/>
</dbReference>
<dbReference type="InterPro" id="IPR010359">
    <property type="entry name" value="IrrE_HExxH"/>
</dbReference>
<dbReference type="InterPro" id="IPR052345">
    <property type="entry name" value="Rad_response_metalloprotease"/>
</dbReference>
<dbReference type="PANTHER" id="PTHR43236">
    <property type="entry name" value="ANTITOXIN HIGA1"/>
    <property type="match status" value="1"/>
</dbReference>
<dbReference type="PANTHER" id="PTHR43236:SF2">
    <property type="entry name" value="BLL0069 PROTEIN"/>
    <property type="match status" value="1"/>
</dbReference>
<dbReference type="Pfam" id="PF06114">
    <property type="entry name" value="Peptidase_M78"/>
    <property type="match status" value="1"/>
</dbReference>
<dbReference type="PROSITE" id="PS00356">
    <property type="entry name" value="HTH_LACI_1"/>
    <property type="match status" value="1"/>
</dbReference>
<dbReference type="PROSITE" id="PS00142">
    <property type="entry name" value="ZINC_PROTEASE"/>
    <property type="match status" value="1"/>
</dbReference>
<sequence>MTDPAPPPTALAAAKARMRELAASYGAGLPGRDTHSLMHGLDGITLTFMPMGQRDGAYDPEHHVILINSQVRPERQRFTLAHEISHALLLGDDDLLSDLHDEYEGDRLEQVIETLCNVGAAALLMPAELIDDLLTRFGPTGRALAELARRADVSATSALYALAERTAPPVIYAVCALSRQEDEGEGGGAKELTVRASSASAGVKYSLSAGTPVPDDHPAALALDTRLPLAQDSYVPFRSGRRMPAYVDAFPERQRVLVSFALPAGRSEPDADKPEAPGDQS</sequence>
<proteinExistence type="evidence at protein level"/>